<sequence>MAEKRNIFLVGPMGAGKSTIGRQLAQQLNMEFYDSDQEIEKRTGADVGWVFDVEGEDGFRNREEKVINELTEKQGIVLATGGGSVKSRETRNRLSARGVVVYLETTIEKQLARTQRDKKRPLLQVEAPPREVLEALANERNPLYEEIADVTIRTDDQSAKVVANQIIHMLESN</sequence>
<keyword id="KW-0028">Amino-acid biosynthesis</keyword>
<keyword id="KW-0057">Aromatic amino acid biosynthesis</keyword>
<keyword id="KW-0067">ATP-binding</keyword>
<keyword id="KW-0963">Cytoplasm</keyword>
<keyword id="KW-0418">Kinase</keyword>
<keyword id="KW-0460">Magnesium</keyword>
<keyword id="KW-0479">Metal-binding</keyword>
<keyword id="KW-0547">Nucleotide-binding</keyword>
<keyword id="KW-0808">Transferase</keyword>
<protein>
    <recommendedName>
        <fullName evidence="1">Shikimate kinase 1</fullName>
        <shortName evidence="1">SK 1</shortName>
        <ecNumber evidence="1">2.7.1.71</ecNumber>
    </recommendedName>
</protein>
<proteinExistence type="inferred from homology"/>
<name>AROK_SALG2</name>
<dbReference type="EC" id="2.7.1.71" evidence="1"/>
<dbReference type="EMBL" id="AM933173">
    <property type="protein sequence ID" value="CAR39724.1"/>
    <property type="molecule type" value="Genomic_DNA"/>
</dbReference>
<dbReference type="RefSeq" id="WP_000818621.1">
    <property type="nucleotide sequence ID" value="NC_011274.1"/>
</dbReference>
<dbReference type="SMR" id="B5R7M7"/>
<dbReference type="GeneID" id="66757820"/>
<dbReference type="KEGG" id="seg:SG3951"/>
<dbReference type="HOGENOM" id="CLU_057607_2_2_6"/>
<dbReference type="UniPathway" id="UPA00053">
    <property type="reaction ID" value="UER00088"/>
</dbReference>
<dbReference type="Proteomes" id="UP000008321">
    <property type="component" value="Chromosome"/>
</dbReference>
<dbReference type="GO" id="GO:0005829">
    <property type="term" value="C:cytosol"/>
    <property type="evidence" value="ECO:0007669"/>
    <property type="project" value="TreeGrafter"/>
</dbReference>
<dbReference type="GO" id="GO:0005524">
    <property type="term" value="F:ATP binding"/>
    <property type="evidence" value="ECO:0007669"/>
    <property type="project" value="UniProtKB-UniRule"/>
</dbReference>
<dbReference type="GO" id="GO:0000287">
    <property type="term" value="F:magnesium ion binding"/>
    <property type="evidence" value="ECO:0007669"/>
    <property type="project" value="UniProtKB-UniRule"/>
</dbReference>
<dbReference type="GO" id="GO:0004765">
    <property type="term" value="F:shikimate kinase activity"/>
    <property type="evidence" value="ECO:0007669"/>
    <property type="project" value="UniProtKB-UniRule"/>
</dbReference>
<dbReference type="GO" id="GO:0008652">
    <property type="term" value="P:amino acid biosynthetic process"/>
    <property type="evidence" value="ECO:0007669"/>
    <property type="project" value="UniProtKB-KW"/>
</dbReference>
<dbReference type="GO" id="GO:0009073">
    <property type="term" value="P:aromatic amino acid family biosynthetic process"/>
    <property type="evidence" value="ECO:0007669"/>
    <property type="project" value="UniProtKB-KW"/>
</dbReference>
<dbReference type="GO" id="GO:0009423">
    <property type="term" value="P:chorismate biosynthetic process"/>
    <property type="evidence" value="ECO:0007669"/>
    <property type="project" value="UniProtKB-UniRule"/>
</dbReference>
<dbReference type="CDD" id="cd00464">
    <property type="entry name" value="SK"/>
    <property type="match status" value="1"/>
</dbReference>
<dbReference type="FunFam" id="3.40.50.300:FF:000099">
    <property type="entry name" value="Shikimate kinase 1"/>
    <property type="match status" value="1"/>
</dbReference>
<dbReference type="Gene3D" id="3.40.50.300">
    <property type="entry name" value="P-loop containing nucleotide triphosphate hydrolases"/>
    <property type="match status" value="1"/>
</dbReference>
<dbReference type="HAMAP" id="MF_00109">
    <property type="entry name" value="Shikimate_kinase"/>
    <property type="match status" value="1"/>
</dbReference>
<dbReference type="InterPro" id="IPR027417">
    <property type="entry name" value="P-loop_NTPase"/>
</dbReference>
<dbReference type="InterPro" id="IPR031322">
    <property type="entry name" value="Shikimate/glucono_kinase"/>
</dbReference>
<dbReference type="InterPro" id="IPR000623">
    <property type="entry name" value="Shikimate_kinase/TSH1"/>
</dbReference>
<dbReference type="InterPro" id="IPR023000">
    <property type="entry name" value="Shikimate_kinase_CS"/>
</dbReference>
<dbReference type="NCBIfam" id="NF003456">
    <property type="entry name" value="PRK05057.1"/>
    <property type="match status" value="1"/>
</dbReference>
<dbReference type="PANTHER" id="PTHR21087">
    <property type="entry name" value="SHIKIMATE KINASE"/>
    <property type="match status" value="1"/>
</dbReference>
<dbReference type="PANTHER" id="PTHR21087:SF16">
    <property type="entry name" value="SHIKIMATE KINASE 1, CHLOROPLASTIC"/>
    <property type="match status" value="1"/>
</dbReference>
<dbReference type="Pfam" id="PF01202">
    <property type="entry name" value="SKI"/>
    <property type="match status" value="1"/>
</dbReference>
<dbReference type="PRINTS" id="PR01100">
    <property type="entry name" value="SHIKIMTKNASE"/>
</dbReference>
<dbReference type="SUPFAM" id="SSF52540">
    <property type="entry name" value="P-loop containing nucleoside triphosphate hydrolases"/>
    <property type="match status" value="1"/>
</dbReference>
<dbReference type="PROSITE" id="PS01128">
    <property type="entry name" value="SHIKIMATE_KINASE"/>
    <property type="match status" value="1"/>
</dbReference>
<comment type="function">
    <text evidence="1">Catalyzes the specific phosphorylation of the 3-hydroxyl group of shikimic acid using ATP as a cosubstrate.</text>
</comment>
<comment type="catalytic activity">
    <reaction evidence="1">
        <text>shikimate + ATP = 3-phosphoshikimate + ADP + H(+)</text>
        <dbReference type="Rhea" id="RHEA:13121"/>
        <dbReference type="ChEBI" id="CHEBI:15378"/>
        <dbReference type="ChEBI" id="CHEBI:30616"/>
        <dbReference type="ChEBI" id="CHEBI:36208"/>
        <dbReference type="ChEBI" id="CHEBI:145989"/>
        <dbReference type="ChEBI" id="CHEBI:456216"/>
        <dbReference type="EC" id="2.7.1.71"/>
    </reaction>
</comment>
<comment type="cofactor">
    <cofactor evidence="1">
        <name>Mg(2+)</name>
        <dbReference type="ChEBI" id="CHEBI:18420"/>
    </cofactor>
    <text evidence="1">Binds 1 Mg(2+) ion per subunit.</text>
</comment>
<comment type="pathway">
    <text evidence="1">Metabolic intermediate biosynthesis; chorismate biosynthesis; chorismate from D-erythrose 4-phosphate and phosphoenolpyruvate: step 5/7.</text>
</comment>
<comment type="subunit">
    <text evidence="1">Monomer.</text>
</comment>
<comment type="subcellular location">
    <subcellularLocation>
        <location evidence="1">Cytoplasm</location>
    </subcellularLocation>
</comment>
<comment type="similarity">
    <text evidence="1">Belongs to the shikimate kinase family.</text>
</comment>
<accession>B5R7M7</accession>
<evidence type="ECO:0000255" key="1">
    <source>
        <dbReference type="HAMAP-Rule" id="MF_00109"/>
    </source>
</evidence>
<organism>
    <name type="scientific">Salmonella gallinarum (strain 287/91 / NCTC 13346)</name>
    <dbReference type="NCBI Taxonomy" id="550538"/>
    <lineage>
        <taxon>Bacteria</taxon>
        <taxon>Pseudomonadati</taxon>
        <taxon>Pseudomonadota</taxon>
        <taxon>Gammaproteobacteria</taxon>
        <taxon>Enterobacterales</taxon>
        <taxon>Enterobacteriaceae</taxon>
        <taxon>Salmonella</taxon>
    </lineage>
</organism>
<reference key="1">
    <citation type="journal article" date="2008" name="Genome Res.">
        <title>Comparative genome analysis of Salmonella enteritidis PT4 and Salmonella gallinarum 287/91 provides insights into evolutionary and host adaptation pathways.</title>
        <authorList>
            <person name="Thomson N.R."/>
            <person name="Clayton D.J."/>
            <person name="Windhorst D."/>
            <person name="Vernikos G."/>
            <person name="Davidson S."/>
            <person name="Churcher C."/>
            <person name="Quail M.A."/>
            <person name="Stevens M."/>
            <person name="Jones M.A."/>
            <person name="Watson M."/>
            <person name="Barron A."/>
            <person name="Layton A."/>
            <person name="Pickard D."/>
            <person name="Kingsley R.A."/>
            <person name="Bignell A."/>
            <person name="Clark L."/>
            <person name="Harris B."/>
            <person name="Ormond D."/>
            <person name="Abdellah Z."/>
            <person name="Brooks K."/>
            <person name="Cherevach I."/>
            <person name="Chillingworth T."/>
            <person name="Woodward J."/>
            <person name="Norberczak H."/>
            <person name="Lord A."/>
            <person name="Arrowsmith C."/>
            <person name="Jagels K."/>
            <person name="Moule S."/>
            <person name="Mungall K."/>
            <person name="Saunders M."/>
            <person name="Whitehead S."/>
            <person name="Chabalgoity J.A."/>
            <person name="Maskell D."/>
            <person name="Humphreys T."/>
            <person name="Roberts M."/>
            <person name="Barrow P.A."/>
            <person name="Dougan G."/>
            <person name="Parkhill J."/>
        </authorList>
    </citation>
    <scope>NUCLEOTIDE SEQUENCE [LARGE SCALE GENOMIC DNA]</scope>
    <source>
        <strain>287/91 / NCTC 13346</strain>
    </source>
</reference>
<feature type="chain" id="PRO_1000094407" description="Shikimate kinase 1">
    <location>
        <begin position="1"/>
        <end position="173"/>
    </location>
</feature>
<feature type="binding site" evidence="1">
    <location>
        <begin position="14"/>
        <end position="19"/>
    </location>
    <ligand>
        <name>ATP</name>
        <dbReference type="ChEBI" id="CHEBI:30616"/>
    </ligand>
</feature>
<feature type="binding site" evidence="1">
    <location>
        <position position="18"/>
    </location>
    <ligand>
        <name>Mg(2+)</name>
        <dbReference type="ChEBI" id="CHEBI:18420"/>
    </ligand>
</feature>
<feature type="binding site" evidence="1">
    <location>
        <position position="36"/>
    </location>
    <ligand>
        <name>substrate</name>
    </ligand>
</feature>
<feature type="binding site" evidence="1">
    <location>
        <position position="60"/>
    </location>
    <ligand>
        <name>substrate</name>
    </ligand>
</feature>
<feature type="binding site" evidence="1">
    <location>
        <position position="82"/>
    </location>
    <ligand>
        <name>substrate</name>
    </ligand>
</feature>
<feature type="binding site" evidence="1">
    <location>
        <position position="120"/>
    </location>
    <ligand>
        <name>ATP</name>
        <dbReference type="ChEBI" id="CHEBI:30616"/>
    </ligand>
</feature>
<feature type="binding site" evidence="1">
    <location>
        <position position="140"/>
    </location>
    <ligand>
        <name>substrate</name>
    </ligand>
</feature>
<feature type="binding site" evidence="1">
    <location>
        <position position="157"/>
    </location>
    <ligand>
        <name>ATP</name>
        <dbReference type="ChEBI" id="CHEBI:30616"/>
    </ligand>
</feature>
<gene>
    <name evidence="1" type="primary">aroK</name>
    <name type="ordered locus">SG3951</name>
</gene>